<sequence length="734" mass="82418">MALRFPRFSQGLAQDPTTRRIWFGIATAHDFESHDDITEERLYQNIFASHFGQLAIIFLWTSGNLFHVAWQGNFETWVQDPLHVRPIAHAIWDPHFGQPAVEAFTRGGALGPVNIAYSGVYQWWYTIGLRTNEDLYIGALFLLFLSAVSLLGGWLHLQPKWKPSVSWFKNAESRLNHHLSGLFGVSSLAWTGHLVHVAIPGSRGESVRWNNFLDVLPHPQGLGPLFTGQWNLYAQNPDSSSHLFGTSQGAGTAILTLLGGFHPQTQSLWLTDMAHHHLAIAFLFLIAGHMYRTNFGIGHSIKDLLEAHIPPGGRLGRGHKGLYDTINNSLHFQLGLALASLGVITSLVAQHMYSLPAYAFIAQDFTTQAALYTHHQYIAGFIMTGAFAHGAIFFIRDYNPEQNEDNVLARMLDHKEAIISHLSWASLFLGFHTLGLYVHNDVMLAFGTPEKQILIEPIFAQWIQSAHGKTSYGFDVLLSSTNSPAFNAGRSIWLPGWLNAINENSNSLFLTIGPGDFLVHHAIALGLHTTTLILVKGALDARGSKLMPDKKDFGYSFPCDGPGRGGTCDISAWDAFYLAVFWMLNTIGWVTFYWHWKHITLWQGNVSQFNESSTYLMGWLRDYLWLNSSQLINGYNPFGMNSLSVWAWMFLFGHLVWATGFMFLISWRGYWQELIETLAWAHERTPLANLIRWRDKPVALSIVQARLVGLAHFSVGYIFTYAAFLIASTSGKFG</sequence>
<evidence type="ECO:0000255" key="1">
    <source>
        <dbReference type="HAMAP-Rule" id="MF_00482"/>
    </source>
</evidence>
<protein>
    <recommendedName>
        <fullName evidence="1">Photosystem I P700 chlorophyll a apoprotein A2</fullName>
        <ecNumber evidence="1">1.97.1.12</ecNumber>
    </recommendedName>
    <alternativeName>
        <fullName evidence="1">PSI-B</fullName>
    </alternativeName>
    <alternativeName>
        <fullName evidence="1">PsaB</fullName>
    </alternativeName>
</protein>
<proteinExistence type="inferred from homology"/>
<organism>
    <name type="scientific">Populus alba</name>
    <name type="common">White poplar</name>
    <dbReference type="NCBI Taxonomy" id="43335"/>
    <lineage>
        <taxon>Eukaryota</taxon>
        <taxon>Viridiplantae</taxon>
        <taxon>Streptophyta</taxon>
        <taxon>Embryophyta</taxon>
        <taxon>Tracheophyta</taxon>
        <taxon>Spermatophyta</taxon>
        <taxon>Magnoliopsida</taxon>
        <taxon>eudicotyledons</taxon>
        <taxon>Gunneridae</taxon>
        <taxon>Pentapetalae</taxon>
        <taxon>rosids</taxon>
        <taxon>fabids</taxon>
        <taxon>Malpighiales</taxon>
        <taxon>Salicaceae</taxon>
        <taxon>Saliceae</taxon>
        <taxon>Populus</taxon>
    </lineage>
</organism>
<keyword id="KW-0004">4Fe-4S</keyword>
<keyword id="KW-0148">Chlorophyll</keyword>
<keyword id="KW-0150">Chloroplast</keyword>
<keyword id="KW-0157">Chromophore</keyword>
<keyword id="KW-0249">Electron transport</keyword>
<keyword id="KW-0408">Iron</keyword>
<keyword id="KW-0411">Iron-sulfur</keyword>
<keyword id="KW-0460">Magnesium</keyword>
<keyword id="KW-0472">Membrane</keyword>
<keyword id="KW-0479">Metal-binding</keyword>
<keyword id="KW-0560">Oxidoreductase</keyword>
<keyword id="KW-0602">Photosynthesis</keyword>
<keyword id="KW-0603">Photosystem I</keyword>
<keyword id="KW-0934">Plastid</keyword>
<keyword id="KW-0793">Thylakoid</keyword>
<keyword id="KW-0812">Transmembrane</keyword>
<keyword id="KW-1133">Transmembrane helix</keyword>
<keyword id="KW-0813">Transport</keyword>
<reference key="1">
    <citation type="submission" date="2005-03" db="EMBL/GenBank/DDBJ databases">
        <title>Complete structure of the chloroplast genome of Populus alba.</title>
        <authorList>
            <person name="Okumura S."/>
            <person name="Yamashita A."/>
            <person name="Kanamoto H."/>
            <person name="Hattori M."/>
            <person name="Takase H."/>
            <person name="Tomizawa K."/>
        </authorList>
    </citation>
    <scope>NUCLEOTIDE SEQUENCE [LARGE SCALE GENOMIC DNA]</scope>
</reference>
<accession>Q14FF8</accession>
<comment type="function">
    <text evidence="1">PsaA and PsaB bind P700, the primary electron donor of photosystem I (PSI), as well as the electron acceptors A0, A1 and FX. PSI is a plastocyanin-ferredoxin oxidoreductase, converting photonic excitation into a charge separation, which transfers an electron from the donor P700 chlorophyll pair to the spectroscopically characterized acceptors A0, A1, FX, FA and FB in turn. Oxidized P700 is reduced on the lumenal side of the thylakoid membrane by plastocyanin.</text>
</comment>
<comment type="catalytic activity">
    <reaction evidence="1">
        <text>reduced [plastocyanin] + hnu + oxidized [2Fe-2S]-[ferredoxin] = oxidized [plastocyanin] + reduced [2Fe-2S]-[ferredoxin]</text>
        <dbReference type="Rhea" id="RHEA:30407"/>
        <dbReference type="Rhea" id="RHEA-COMP:10000"/>
        <dbReference type="Rhea" id="RHEA-COMP:10001"/>
        <dbReference type="Rhea" id="RHEA-COMP:10039"/>
        <dbReference type="Rhea" id="RHEA-COMP:10040"/>
        <dbReference type="ChEBI" id="CHEBI:29036"/>
        <dbReference type="ChEBI" id="CHEBI:30212"/>
        <dbReference type="ChEBI" id="CHEBI:33737"/>
        <dbReference type="ChEBI" id="CHEBI:33738"/>
        <dbReference type="ChEBI" id="CHEBI:49552"/>
        <dbReference type="EC" id="1.97.1.12"/>
    </reaction>
</comment>
<comment type="cofactor">
    <text evidence="1">P700 is a chlorophyll a/chlorophyll a' dimer, A0 is one or more chlorophyll a, A1 is one or both phylloquinones and FX is a shared 4Fe-4S iron-sulfur center.</text>
</comment>
<comment type="subunit">
    <text evidence="1">The PsaA/B heterodimer binds the P700 chlorophyll special pair and subsequent electron acceptors. PSI consists of a core antenna complex that captures photons, and an electron transfer chain that converts photonic excitation into a charge separation. The eukaryotic PSI reaction center is composed of at least 11 subunits.</text>
</comment>
<comment type="subcellular location">
    <subcellularLocation>
        <location>Plastid</location>
        <location>Chloroplast thylakoid membrane</location>
        <topology>Multi-pass membrane protein</topology>
    </subcellularLocation>
</comment>
<comment type="similarity">
    <text evidence="1">Belongs to the PsaA/PsaB family.</text>
</comment>
<gene>
    <name evidence="1" type="primary">psaB</name>
</gene>
<geneLocation type="chloroplast"/>
<dbReference type="EC" id="1.97.1.12" evidence="1"/>
<dbReference type="EMBL" id="AP008956">
    <property type="protein sequence ID" value="BAE97204.1"/>
    <property type="molecule type" value="Genomic_DNA"/>
</dbReference>
<dbReference type="RefSeq" id="YP_665557.1">
    <property type="nucleotide sequence ID" value="NC_008235.1"/>
</dbReference>
<dbReference type="SMR" id="Q14FF8"/>
<dbReference type="GeneID" id="4178154"/>
<dbReference type="KEGG" id="palz:4178154"/>
<dbReference type="OrthoDB" id="36488at3646"/>
<dbReference type="GO" id="GO:0009535">
    <property type="term" value="C:chloroplast thylakoid membrane"/>
    <property type="evidence" value="ECO:0007669"/>
    <property type="project" value="UniProtKB-SubCell"/>
</dbReference>
<dbReference type="GO" id="GO:0009522">
    <property type="term" value="C:photosystem I"/>
    <property type="evidence" value="ECO:0007669"/>
    <property type="project" value="UniProtKB-KW"/>
</dbReference>
<dbReference type="GO" id="GO:0051539">
    <property type="term" value="F:4 iron, 4 sulfur cluster binding"/>
    <property type="evidence" value="ECO:0007669"/>
    <property type="project" value="UniProtKB-KW"/>
</dbReference>
<dbReference type="GO" id="GO:0016168">
    <property type="term" value="F:chlorophyll binding"/>
    <property type="evidence" value="ECO:0007669"/>
    <property type="project" value="UniProtKB-KW"/>
</dbReference>
<dbReference type="GO" id="GO:0009055">
    <property type="term" value="F:electron transfer activity"/>
    <property type="evidence" value="ECO:0007669"/>
    <property type="project" value="UniProtKB-UniRule"/>
</dbReference>
<dbReference type="GO" id="GO:0000287">
    <property type="term" value="F:magnesium ion binding"/>
    <property type="evidence" value="ECO:0007669"/>
    <property type="project" value="UniProtKB-UniRule"/>
</dbReference>
<dbReference type="GO" id="GO:0016491">
    <property type="term" value="F:oxidoreductase activity"/>
    <property type="evidence" value="ECO:0007669"/>
    <property type="project" value="UniProtKB-KW"/>
</dbReference>
<dbReference type="GO" id="GO:0015979">
    <property type="term" value="P:photosynthesis"/>
    <property type="evidence" value="ECO:0007669"/>
    <property type="project" value="UniProtKB-UniRule"/>
</dbReference>
<dbReference type="FunFam" id="1.20.1130.10:FF:000001">
    <property type="entry name" value="Photosystem I P700 chlorophyll a apoprotein A2"/>
    <property type="match status" value="1"/>
</dbReference>
<dbReference type="Gene3D" id="1.20.1130.10">
    <property type="entry name" value="Photosystem I PsaA/PsaB"/>
    <property type="match status" value="1"/>
</dbReference>
<dbReference type="HAMAP" id="MF_00482">
    <property type="entry name" value="PSI_PsaB"/>
    <property type="match status" value="1"/>
</dbReference>
<dbReference type="InterPro" id="IPR001280">
    <property type="entry name" value="PSI_PsaA/B"/>
</dbReference>
<dbReference type="InterPro" id="IPR020586">
    <property type="entry name" value="PSI_PsaA/B_CS"/>
</dbReference>
<dbReference type="InterPro" id="IPR036408">
    <property type="entry name" value="PSI_PsaA/B_sf"/>
</dbReference>
<dbReference type="InterPro" id="IPR006244">
    <property type="entry name" value="PSI_PsaB"/>
</dbReference>
<dbReference type="NCBIfam" id="TIGR01336">
    <property type="entry name" value="psaB"/>
    <property type="match status" value="1"/>
</dbReference>
<dbReference type="PANTHER" id="PTHR30128">
    <property type="entry name" value="OUTER MEMBRANE PROTEIN, OMPA-RELATED"/>
    <property type="match status" value="1"/>
</dbReference>
<dbReference type="PANTHER" id="PTHR30128:SF19">
    <property type="entry name" value="PHOTOSYSTEM I P700 CHLOROPHYLL A APOPROTEIN A1-RELATED"/>
    <property type="match status" value="1"/>
</dbReference>
<dbReference type="Pfam" id="PF00223">
    <property type="entry name" value="PsaA_PsaB"/>
    <property type="match status" value="1"/>
</dbReference>
<dbReference type="PIRSF" id="PIRSF002905">
    <property type="entry name" value="PSI_A"/>
    <property type="match status" value="1"/>
</dbReference>
<dbReference type="PRINTS" id="PR00257">
    <property type="entry name" value="PHOTSYSPSAAB"/>
</dbReference>
<dbReference type="SUPFAM" id="SSF81558">
    <property type="entry name" value="Photosystem I subunits PsaA/PsaB"/>
    <property type="match status" value="1"/>
</dbReference>
<dbReference type="PROSITE" id="PS00419">
    <property type="entry name" value="PHOTOSYSTEM_I_PSAAB"/>
    <property type="match status" value="1"/>
</dbReference>
<name>PSAB_POPAL</name>
<feature type="chain" id="PRO_0000277129" description="Photosystem I P700 chlorophyll a apoprotein A2">
    <location>
        <begin position="1"/>
        <end position="734"/>
    </location>
</feature>
<feature type="transmembrane region" description="Helical; Name=I" evidence="1">
    <location>
        <begin position="46"/>
        <end position="69"/>
    </location>
</feature>
<feature type="transmembrane region" description="Helical; Name=II" evidence="1">
    <location>
        <begin position="135"/>
        <end position="158"/>
    </location>
</feature>
<feature type="transmembrane region" description="Helical; Name=III" evidence="1">
    <location>
        <begin position="175"/>
        <end position="199"/>
    </location>
</feature>
<feature type="transmembrane region" description="Helical; Name=IV" evidence="1">
    <location>
        <begin position="273"/>
        <end position="291"/>
    </location>
</feature>
<feature type="transmembrane region" description="Helical; Name=V" evidence="1">
    <location>
        <begin position="330"/>
        <end position="353"/>
    </location>
</feature>
<feature type="transmembrane region" description="Helical; Name=VI" evidence="1">
    <location>
        <begin position="369"/>
        <end position="395"/>
    </location>
</feature>
<feature type="transmembrane region" description="Helical; Name=VII" evidence="1">
    <location>
        <begin position="417"/>
        <end position="439"/>
    </location>
</feature>
<feature type="transmembrane region" description="Helical; Name=VIII" evidence="1">
    <location>
        <begin position="517"/>
        <end position="535"/>
    </location>
</feature>
<feature type="transmembrane region" description="Helical; Name=IX" evidence="1">
    <location>
        <begin position="575"/>
        <end position="596"/>
    </location>
</feature>
<feature type="transmembrane region" description="Helical; Name=X" evidence="1">
    <location>
        <begin position="643"/>
        <end position="665"/>
    </location>
</feature>
<feature type="transmembrane region" description="Helical; Name=XI" evidence="1">
    <location>
        <begin position="707"/>
        <end position="727"/>
    </location>
</feature>
<feature type="binding site" evidence="1">
    <location>
        <position position="559"/>
    </location>
    <ligand>
        <name>[4Fe-4S] cluster</name>
        <dbReference type="ChEBI" id="CHEBI:49883"/>
        <note>ligand shared between dimeric partners</note>
    </ligand>
</feature>
<feature type="binding site" evidence="1">
    <location>
        <position position="568"/>
    </location>
    <ligand>
        <name>[4Fe-4S] cluster</name>
        <dbReference type="ChEBI" id="CHEBI:49883"/>
        <note>ligand shared between dimeric partners</note>
    </ligand>
</feature>
<feature type="binding site" description="axial binding residue" evidence="1">
    <location>
        <position position="654"/>
    </location>
    <ligand>
        <name>chlorophyll a</name>
        <dbReference type="ChEBI" id="CHEBI:58416"/>
        <label>B1</label>
    </ligand>
    <ligandPart>
        <name>Mg</name>
        <dbReference type="ChEBI" id="CHEBI:25107"/>
    </ligandPart>
</feature>
<feature type="binding site" description="axial binding residue" evidence="1">
    <location>
        <position position="662"/>
    </location>
    <ligand>
        <name>chlorophyll a</name>
        <dbReference type="ChEBI" id="CHEBI:58416"/>
        <label>B3</label>
    </ligand>
    <ligandPart>
        <name>Mg</name>
        <dbReference type="ChEBI" id="CHEBI:25107"/>
    </ligandPart>
</feature>
<feature type="binding site" evidence="1">
    <location>
        <position position="670"/>
    </location>
    <ligand>
        <name>chlorophyll a</name>
        <dbReference type="ChEBI" id="CHEBI:58416"/>
        <label>B3</label>
    </ligand>
</feature>
<feature type="binding site" evidence="1">
    <location>
        <position position="671"/>
    </location>
    <ligand>
        <name>phylloquinone</name>
        <dbReference type="ChEBI" id="CHEBI:18067"/>
        <label>B</label>
    </ligand>
</feature>